<keyword id="KW-0963">Cytoplasm</keyword>
<keyword id="KW-0227">DNA damage</keyword>
<keyword id="KW-0234">DNA repair</keyword>
<keyword id="KW-0378">Hydrolase</keyword>
<reference key="1">
    <citation type="journal article" date="2001" name="Nature">
        <title>Complete genome sequence of a multiple drug resistant Salmonella enterica serovar Typhi CT18.</title>
        <authorList>
            <person name="Parkhill J."/>
            <person name="Dougan G."/>
            <person name="James K.D."/>
            <person name="Thomson N.R."/>
            <person name="Pickard D."/>
            <person name="Wain J."/>
            <person name="Churcher C.M."/>
            <person name="Mungall K.L."/>
            <person name="Bentley S.D."/>
            <person name="Holden M.T.G."/>
            <person name="Sebaihia M."/>
            <person name="Baker S."/>
            <person name="Basham D."/>
            <person name="Brooks K."/>
            <person name="Chillingworth T."/>
            <person name="Connerton P."/>
            <person name="Cronin A."/>
            <person name="Davis P."/>
            <person name="Davies R.M."/>
            <person name="Dowd L."/>
            <person name="White N."/>
            <person name="Farrar J."/>
            <person name="Feltwell T."/>
            <person name="Hamlin N."/>
            <person name="Haque A."/>
            <person name="Hien T.T."/>
            <person name="Holroyd S."/>
            <person name="Jagels K."/>
            <person name="Krogh A."/>
            <person name="Larsen T.S."/>
            <person name="Leather S."/>
            <person name="Moule S."/>
            <person name="O'Gaora P."/>
            <person name="Parry C."/>
            <person name="Quail M.A."/>
            <person name="Rutherford K.M."/>
            <person name="Simmonds M."/>
            <person name="Skelton J."/>
            <person name="Stevens K."/>
            <person name="Whitehead S."/>
            <person name="Barrell B.G."/>
        </authorList>
    </citation>
    <scope>NUCLEOTIDE SEQUENCE [LARGE SCALE GENOMIC DNA]</scope>
    <source>
        <strain>CT18</strain>
    </source>
</reference>
<reference key="2">
    <citation type="journal article" date="2003" name="J. Bacteriol.">
        <title>Comparative genomics of Salmonella enterica serovar Typhi strains Ty2 and CT18.</title>
        <authorList>
            <person name="Deng W."/>
            <person name="Liou S.-R."/>
            <person name="Plunkett G. III"/>
            <person name="Mayhew G.F."/>
            <person name="Rose D.J."/>
            <person name="Burland V."/>
            <person name="Kodoyianni V."/>
            <person name="Schwartz D.C."/>
            <person name="Blattner F.R."/>
        </authorList>
    </citation>
    <scope>NUCLEOTIDE SEQUENCE [LARGE SCALE GENOMIC DNA]</scope>
    <source>
        <strain>ATCC 700931 / Ty2</strain>
    </source>
</reference>
<name>UNG_SALTI</name>
<proteinExistence type="inferred from homology"/>
<gene>
    <name evidence="2" type="primary">ung</name>
    <name type="ordered locus">STY2840</name>
    <name type="ordered locus">t0263</name>
</gene>
<protein>
    <recommendedName>
        <fullName evidence="2">Uracil-DNA glycosylase</fullName>
        <shortName evidence="2">UDG</shortName>
        <ecNumber evidence="2">3.2.2.27</ecNumber>
    </recommendedName>
</protein>
<organism>
    <name type="scientific">Salmonella typhi</name>
    <dbReference type="NCBI Taxonomy" id="90370"/>
    <lineage>
        <taxon>Bacteria</taxon>
        <taxon>Pseudomonadati</taxon>
        <taxon>Pseudomonadota</taxon>
        <taxon>Gammaproteobacteria</taxon>
        <taxon>Enterobacterales</taxon>
        <taxon>Enterobacteriaceae</taxon>
        <taxon>Salmonella</taxon>
    </lineage>
</organism>
<sequence length="229" mass="25480">MATELTWHDVLADEKQQPYFINTLHTVAGERQSGITVYPPQKDVFNAFRFTELGDVKVVILGQDPYHGPGQAHGLAFSVRPGIAPPPSLVNMYKELEASIPGFVRPAHGYLESWARQGVLLLNTVLTVRAGQAHSHASLGWETFTDKVISLINQHREGVVFLLWGSHAQKKGAIIDPQRHHILKAPHPSPLSAHRGFFGCNHFALTNQWLEQHGEKTIDWTPVLPAESE</sequence>
<feature type="initiator methionine" description="Removed" evidence="1">
    <location>
        <position position="1"/>
    </location>
</feature>
<feature type="chain" id="PRO_0000176134" description="Uracil-DNA glycosylase">
    <location>
        <begin position="2"/>
        <end position="229"/>
    </location>
</feature>
<feature type="active site" description="Proton acceptor" evidence="2">
    <location>
        <position position="64"/>
    </location>
</feature>
<accession>P67074</accession>
<accession>Q8XGK6</accession>
<dbReference type="EC" id="3.2.2.27" evidence="2"/>
<dbReference type="EMBL" id="AL513382">
    <property type="protein sequence ID" value="CAD05831.1"/>
    <property type="molecule type" value="Genomic_DNA"/>
</dbReference>
<dbReference type="EMBL" id="AE014613">
    <property type="protein sequence ID" value="AAO67989.1"/>
    <property type="molecule type" value="Genomic_DNA"/>
</dbReference>
<dbReference type="RefSeq" id="NP_457122.1">
    <property type="nucleotide sequence ID" value="NC_003198.1"/>
</dbReference>
<dbReference type="RefSeq" id="WP_000179978.1">
    <property type="nucleotide sequence ID" value="NZ_WSUR01000007.1"/>
</dbReference>
<dbReference type="SMR" id="P67074"/>
<dbReference type="STRING" id="220341.gene:17586730"/>
<dbReference type="KEGG" id="stt:t0263"/>
<dbReference type="KEGG" id="sty:STY2840"/>
<dbReference type="PATRIC" id="fig|220341.7.peg.2889"/>
<dbReference type="eggNOG" id="COG0692">
    <property type="taxonomic scope" value="Bacteria"/>
</dbReference>
<dbReference type="HOGENOM" id="CLU_032162_3_0_6"/>
<dbReference type="OMA" id="PDNGYLM"/>
<dbReference type="OrthoDB" id="9804372at2"/>
<dbReference type="Proteomes" id="UP000000541">
    <property type="component" value="Chromosome"/>
</dbReference>
<dbReference type="Proteomes" id="UP000002670">
    <property type="component" value="Chromosome"/>
</dbReference>
<dbReference type="GO" id="GO:0005737">
    <property type="term" value="C:cytoplasm"/>
    <property type="evidence" value="ECO:0007669"/>
    <property type="project" value="UniProtKB-SubCell"/>
</dbReference>
<dbReference type="GO" id="GO:0004844">
    <property type="term" value="F:uracil DNA N-glycosylase activity"/>
    <property type="evidence" value="ECO:0007669"/>
    <property type="project" value="UniProtKB-UniRule"/>
</dbReference>
<dbReference type="GO" id="GO:0097510">
    <property type="term" value="P:base-excision repair, AP site formation via deaminated base removal"/>
    <property type="evidence" value="ECO:0007669"/>
    <property type="project" value="TreeGrafter"/>
</dbReference>
<dbReference type="CDD" id="cd10027">
    <property type="entry name" value="UDG-F1-like"/>
    <property type="match status" value="1"/>
</dbReference>
<dbReference type="FunFam" id="3.40.470.10:FF:000001">
    <property type="entry name" value="Uracil-DNA glycosylase"/>
    <property type="match status" value="1"/>
</dbReference>
<dbReference type="Gene3D" id="3.40.470.10">
    <property type="entry name" value="Uracil-DNA glycosylase-like domain"/>
    <property type="match status" value="1"/>
</dbReference>
<dbReference type="HAMAP" id="MF_00148">
    <property type="entry name" value="UDG"/>
    <property type="match status" value="1"/>
</dbReference>
<dbReference type="InterPro" id="IPR002043">
    <property type="entry name" value="UDG_fam1"/>
</dbReference>
<dbReference type="InterPro" id="IPR018085">
    <property type="entry name" value="Ura-DNA_Glyclase_AS"/>
</dbReference>
<dbReference type="InterPro" id="IPR005122">
    <property type="entry name" value="Uracil-DNA_glycosylase-like"/>
</dbReference>
<dbReference type="InterPro" id="IPR036895">
    <property type="entry name" value="Uracil-DNA_glycosylase-like_sf"/>
</dbReference>
<dbReference type="NCBIfam" id="NF003588">
    <property type="entry name" value="PRK05254.1-1"/>
    <property type="match status" value="1"/>
</dbReference>
<dbReference type="NCBIfam" id="NF003589">
    <property type="entry name" value="PRK05254.1-2"/>
    <property type="match status" value="1"/>
</dbReference>
<dbReference type="NCBIfam" id="NF003591">
    <property type="entry name" value="PRK05254.1-4"/>
    <property type="match status" value="1"/>
</dbReference>
<dbReference type="NCBIfam" id="NF003592">
    <property type="entry name" value="PRK05254.1-5"/>
    <property type="match status" value="1"/>
</dbReference>
<dbReference type="NCBIfam" id="TIGR00628">
    <property type="entry name" value="ung"/>
    <property type="match status" value="1"/>
</dbReference>
<dbReference type="PANTHER" id="PTHR11264">
    <property type="entry name" value="URACIL-DNA GLYCOSYLASE"/>
    <property type="match status" value="1"/>
</dbReference>
<dbReference type="PANTHER" id="PTHR11264:SF0">
    <property type="entry name" value="URACIL-DNA GLYCOSYLASE"/>
    <property type="match status" value="1"/>
</dbReference>
<dbReference type="Pfam" id="PF03167">
    <property type="entry name" value="UDG"/>
    <property type="match status" value="1"/>
</dbReference>
<dbReference type="SMART" id="SM00986">
    <property type="entry name" value="UDG"/>
    <property type="match status" value="1"/>
</dbReference>
<dbReference type="SMART" id="SM00987">
    <property type="entry name" value="UreE_C"/>
    <property type="match status" value="1"/>
</dbReference>
<dbReference type="SUPFAM" id="SSF52141">
    <property type="entry name" value="Uracil-DNA glycosylase-like"/>
    <property type="match status" value="1"/>
</dbReference>
<dbReference type="PROSITE" id="PS00130">
    <property type="entry name" value="U_DNA_GLYCOSYLASE"/>
    <property type="match status" value="1"/>
</dbReference>
<evidence type="ECO:0000250" key="1"/>
<evidence type="ECO:0000255" key="2">
    <source>
        <dbReference type="HAMAP-Rule" id="MF_00148"/>
    </source>
</evidence>
<comment type="function">
    <text evidence="2">Excises uracil residues from the DNA which can arise as a result of misincorporation of dUMP residues by DNA polymerase or due to deamination of cytosine.</text>
</comment>
<comment type="catalytic activity">
    <reaction evidence="2">
        <text>Hydrolyzes single-stranded DNA or mismatched double-stranded DNA and polynucleotides, releasing free uracil.</text>
        <dbReference type="EC" id="3.2.2.27"/>
    </reaction>
</comment>
<comment type="subunit">
    <text evidence="1">Monomer.</text>
</comment>
<comment type="subcellular location">
    <subcellularLocation>
        <location evidence="2">Cytoplasm</location>
    </subcellularLocation>
</comment>
<comment type="similarity">
    <text evidence="2">Belongs to the uracil-DNA glycosylase (UDG) superfamily. UNG family.</text>
</comment>